<dbReference type="EMBL" id="AP000423">
    <property type="protein sequence ID" value="BAA84404.1"/>
    <property type="molecule type" value="Genomic_DNA"/>
</dbReference>
<dbReference type="RefSeq" id="NP_051078.1">
    <property type="nucleotide sequence ID" value="NC_000932.1"/>
</dbReference>
<dbReference type="SMR" id="P56775"/>
<dbReference type="FunCoup" id="P56775">
    <property type="interactions" value="34"/>
</dbReference>
<dbReference type="STRING" id="3702.P56775"/>
<dbReference type="PaxDb" id="3702-ATCG00600.1"/>
<dbReference type="ProteomicsDB" id="236307"/>
<dbReference type="EnsemblPlants" id="ATCG00600.1">
    <property type="protein sequence ID" value="ATCG00600.1"/>
    <property type="gene ID" value="ATCG00600"/>
</dbReference>
<dbReference type="GeneID" id="844743"/>
<dbReference type="Gramene" id="ATCG00600.1">
    <property type="protein sequence ID" value="ATCG00600.1"/>
    <property type="gene ID" value="ATCG00600"/>
</dbReference>
<dbReference type="KEGG" id="ath:ArthCp041"/>
<dbReference type="Araport" id="ATCG00600"/>
<dbReference type="TAIR" id="ATCG00600">
    <property type="gene designation" value="PETG"/>
</dbReference>
<dbReference type="eggNOG" id="ENOG502SD3G">
    <property type="taxonomic scope" value="Eukaryota"/>
</dbReference>
<dbReference type="HOGENOM" id="CLU_216962_0_0_1"/>
<dbReference type="InParanoid" id="P56775"/>
<dbReference type="PRO" id="PR:P56775"/>
<dbReference type="Proteomes" id="UP000006548">
    <property type="component" value="Chloroplast Pltd"/>
</dbReference>
<dbReference type="ExpressionAtlas" id="P56775">
    <property type="expression patterns" value="baseline and differential"/>
</dbReference>
<dbReference type="GO" id="GO:0009535">
    <property type="term" value="C:chloroplast thylakoid membrane"/>
    <property type="evidence" value="ECO:0007669"/>
    <property type="project" value="UniProtKB-SubCell"/>
</dbReference>
<dbReference type="GO" id="GO:0009512">
    <property type="term" value="C:cytochrome b6f complex"/>
    <property type="evidence" value="ECO:0007669"/>
    <property type="project" value="InterPro"/>
</dbReference>
<dbReference type="GO" id="GO:0045158">
    <property type="term" value="F:electron transporter, transferring electrons within cytochrome b6/f complex of photosystem II activity"/>
    <property type="evidence" value="ECO:0007669"/>
    <property type="project" value="UniProtKB-UniRule"/>
</dbReference>
<dbReference type="GO" id="GO:0017004">
    <property type="term" value="P:cytochrome complex assembly"/>
    <property type="evidence" value="ECO:0007669"/>
    <property type="project" value="UniProtKB-UniRule"/>
</dbReference>
<dbReference type="GO" id="GO:0015979">
    <property type="term" value="P:photosynthesis"/>
    <property type="evidence" value="ECO:0007669"/>
    <property type="project" value="UniProtKB-KW"/>
</dbReference>
<dbReference type="HAMAP" id="MF_00432">
    <property type="entry name" value="Cytb6_f_PetG"/>
    <property type="match status" value="1"/>
</dbReference>
<dbReference type="InterPro" id="IPR003683">
    <property type="entry name" value="Cyt_6/f_cplx_su5"/>
</dbReference>
<dbReference type="InterPro" id="IPR036099">
    <property type="entry name" value="Cyt_6/f_cplx_su5_sf"/>
</dbReference>
<dbReference type="NCBIfam" id="NF001907">
    <property type="entry name" value="PRK00665.1"/>
    <property type="match status" value="1"/>
</dbReference>
<dbReference type="Pfam" id="PF02529">
    <property type="entry name" value="PetG"/>
    <property type="match status" value="1"/>
</dbReference>
<dbReference type="PIRSF" id="PIRSF000034">
    <property type="entry name" value="Cyt_b6-f_V"/>
    <property type="match status" value="1"/>
</dbReference>
<dbReference type="SUPFAM" id="SSF103446">
    <property type="entry name" value="PetG subunit of the cytochrome b6f complex"/>
    <property type="match status" value="1"/>
</dbReference>
<feature type="chain" id="PRO_0000216368" description="Cytochrome b6-f complex subunit 5">
    <location>
        <begin position="1"/>
        <end position="37"/>
    </location>
</feature>
<feature type="transmembrane region" description="Helical" evidence="1">
    <location>
        <begin position="5"/>
        <end position="25"/>
    </location>
</feature>
<protein>
    <recommendedName>
        <fullName evidence="1">Cytochrome b6-f complex subunit 5</fullName>
    </recommendedName>
    <alternativeName>
        <fullName evidence="1">Cytochrome b6-f complex subunit PetG</fullName>
    </alternativeName>
    <alternativeName>
        <fullName evidence="1">Cytochrome b6-f complex subunit V</fullName>
    </alternativeName>
</protein>
<proteinExistence type="inferred from homology"/>
<gene>
    <name evidence="1" type="primary">petG</name>
    <name type="ordered locus">AtCg00600</name>
</gene>
<sequence>MIEVFLFGIVLGLIPITLAGLFVTAYLQYRRGDQLDF</sequence>
<reference key="1">
    <citation type="journal article" date="1999" name="DNA Res.">
        <title>Complete structure of the chloroplast genome of Arabidopsis thaliana.</title>
        <authorList>
            <person name="Sato S."/>
            <person name="Nakamura Y."/>
            <person name="Kaneko T."/>
            <person name="Asamizu E."/>
            <person name="Tabata S."/>
        </authorList>
    </citation>
    <scope>NUCLEOTIDE SEQUENCE [LARGE SCALE GENOMIC DNA]</scope>
    <source>
        <strain>cv. Columbia</strain>
    </source>
</reference>
<organism>
    <name type="scientific">Arabidopsis thaliana</name>
    <name type="common">Mouse-ear cress</name>
    <dbReference type="NCBI Taxonomy" id="3702"/>
    <lineage>
        <taxon>Eukaryota</taxon>
        <taxon>Viridiplantae</taxon>
        <taxon>Streptophyta</taxon>
        <taxon>Embryophyta</taxon>
        <taxon>Tracheophyta</taxon>
        <taxon>Spermatophyta</taxon>
        <taxon>Magnoliopsida</taxon>
        <taxon>eudicotyledons</taxon>
        <taxon>Gunneridae</taxon>
        <taxon>Pentapetalae</taxon>
        <taxon>rosids</taxon>
        <taxon>malvids</taxon>
        <taxon>Brassicales</taxon>
        <taxon>Brassicaceae</taxon>
        <taxon>Camelineae</taxon>
        <taxon>Arabidopsis</taxon>
    </lineage>
</organism>
<accession>P56775</accession>
<comment type="function">
    <text evidence="1">Component of the cytochrome b6-f complex, which mediates electron transfer between photosystem II (PSII) and photosystem I (PSI), cyclic electron flow around PSI, and state transitions. PetG is required for either the stability or assembly of the cytochrome b6-f complex.</text>
</comment>
<comment type="subunit">
    <text evidence="1">The 4 large subunits of the cytochrome b6-f complex are cytochrome b6, subunit IV (17 kDa polypeptide, PetD), cytochrome f and the Rieske protein, while the 4 small subunits are PetG, PetL, PetM and PetN. The complex functions as a dimer.</text>
</comment>
<comment type="subcellular location">
    <subcellularLocation>
        <location evidence="1">Plastid</location>
        <location evidence="1">Chloroplast thylakoid membrane</location>
        <topology evidence="1">Single-pass membrane protein</topology>
    </subcellularLocation>
</comment>
<comment type="similarity">
    <text evidence="1">Belongs to the PetG family.</text>
</comment>
<name>PETG_ARATH</name>
<geneLocation type="chloroplast"/>
<keyword id="KW-0150">Chloroplast</keyword>
<keyword id="KW-0249">Electron transport</keyword>
<keyword id="KW-0472">Membrane</keyword>
<keyword id="KW-0602">Photosynthesis</keyword>
<keyword id="KW-0934">Plastid</keyword>
<keyword id="KW-1185">Reference proteome</keyword>
<keyword id="KW-0793">Thylakoid</keyword>
<keyword id="KW-0812">Transmembrane</keyword>
<keyword id="KW-1133">Transmembrane helix</keyword>
<keyword id="KW-0813">Transport</keyword>
<evidence type="ECO:0000255" key="1">
    <source>
        <dbReference type="HAMAP-Rule" id="MF_00432"/>
    </source>
</evidence>